<accession>Q5E2B1</accession>
<name>PFKA_ALIF1</name>
<keyword id="KW-0021">Allosteric enzyme</keyword>
<keyword id="KW-0067">ATP-binding</keyword>
<keyword id="KW-0963">Cytoplasm</keyword>
<keyword id="KW-0324">Glycolysis</keyword>
<keyword id="KW-0418">Kinase</keyword>
<keyword id="KW-0460">Magnesium</keyword>
<keyword id="KW-0479">Metal-binding</keyword>
<keyword id="KW-0547">Nucleotide-binding</keyword>
<keyword id="KW-1185">Reference proteome</keyword>
<keyword id="KW-0808">Transferase</keyword>
<reference key="1">
    <citation type="journal article" date="2005" name="Proc. Natl. Acad. Sci. U.S.A.">
        <title>Complete genome sequence of Vibrio fischeri: a symbiotic bacterium with pathogenic congeners.</title>
        <authorList>
            <person name="Ruby E.G."/>
            <person name="Urbanowski M."/>
            <person name="Campbell J."/>
            <person name="Dunn A."/>
            <person name="Faini M."/>
            <person name="Gunsalus R."/>
            <person name="Lostroh P."/>
            <person name="Lupp C."/>
            <person name="McCann J."/>
            <person name="Millikan D."/>
            <person name="Schaefer A."/>
            <person name="Stabb E."/>
            <person name="Stevens A."/>
            <person name="Visick K."/>
            <person name="Whistler C."/>
            <person name="Greenberg E.P."/>
        </authorList>
    </citation>
    <scope>NUCLEOTIDE SEQUENCE [LARGE SCALE GENOMIC DNA]</scope>
    <source>
        <strain>ATCC 700601 / ES114</strain>
    </source>
</reference>
<evidence type="ECO:0000255" key="1">
    <source>
        <dbReference type="HAMAP-Rule" id="MF_00339"/>
    </source>
</evidence>
<comment type="function">
    <text evidence="1">Catalyzes the phosphorylation of D-fructose 6-phosphate to fructose 1,6-bisphosphate by ATP, the first committing step of glycolysis.</text>
</comment>
<comment type="catalytic activity">
    <reaction evidence="1">
        <text>beta-D-fructose 6-phosphate + ATP = beta-D-fructose 1,6-bisphosphate + ADP + H(+)</text>
        <dbReference type="Rhea" id="RHEA:16109"/>
        <dbReference type="ChEBI" id="CHEBI:15378"/>
        <dbReference type="ChEBI" id="CHEBI:30616"/>
        <dbReference type="ChEBI" id="CHEBI:32966"/>
        <dbReference type="ChEBI" id="CHEBI:57634"/>
        <dbReference type="ChEBI" id="CHEBI:456216"/>
        <dbReference type="EC" id="2.7.1.11"/>
    </reaction>
</comment>
<comment type="cofactor">
    <cofactor evidence="1">
        <name>Mg(2+)</name>
        <dbReference type="ChEBI" id="CHEBI:18420"/>
    </cofactor>
</comment>
<comment type="activity regulation">
    <text evidence="1">Allosterically activated by ADP and other diphosphonucleosides, and allosterically inhibited by phosphoenolpyruvate.</text>
</comment>
<comment type="pathway">
    <text evidence="1">Carbohydrate degradation; glycolysis; D-glyceraldehyde 3-phosphate and glycerone phosphate from D-glucose: step 3/4.</text>
</comment>
<comment type="subunit">
    <text evidence="1">Homotetramer.</text>
</comment>
<comment type="subcellular location">
    <subcellularLocation>
        <location evidence="1">Cytoplasm</location>
    </subcellularLocation>
</comment>
<comment type="similarity">
    <text evidence="1">Belongs to the phosphofructokinase type A (PFKA) family. ATP-dependent PFK group I subfamily. Prokaryotic clade 'B1' sub-subfamily.</text>
</comment>
<gene>
    <name evidence="1" type="primary">pfkA</name>
    <name type="ordered locus">VF_2340</name>
</gene>
<protein>
    <recommendedName>
        <fullName evidence="1">ATP-dependent 6-phosphofructokinase</fullName>
        <shortName evidence="1">ATP-PFK</shortName>
        <shortName evidence="1">Phosphofructokinase</shortName>
        <ecNumber evidence="1">2.7.1.11</ecNumber>
    </recommendedName>
    <alternativeName>
        <fullName evidence="1">Phosphohexokinase</fullName>
    </alternativeName>
</protein>
<proteinExistence type="inferred from homology"/>
<feature type="chain" id="PRO_1000059807" description="ATP-dependent 6-phosphofructokinase">
    <location>
        <begin position="1"/>
        <end position="320"/>
    </location>
</feature>
<feature type="active site" description="Proton acceptor" evidence="1">
    <location>
        <position position="128"/>
    </location>
</feature>
<feature type="binding site" evidence="1">
    <location>
        <position position="12"/>
    </location>
    <ligand>
        <name>ATP</name>
        <dbReference type="ChEBI" id="CHEBI:30616"/>
    </ligand>
</feature>
<feature type="binding site" evidence="1">
    <location>
        <begin position="22"/>
        <end position="26"/>
    </location>
    <ligand>
        <name>ADP</name>
        <dbReference type="ChEBI" id="CHEBI:456216"/>
        <note>allosteric activator; ligand shared between dimeric partners</note>
    </ligand>
</feature>
<feature type="binding site" evidence="1">
    <location>
        <begin position="73"/>
        <end position="74"/>
    </location>
    <ligand>
        <name>ATP</name>
        <dbReference type="ChEBI" id="CHEBI:30616"/>
    </ligand>
</feature>
<feature type="binding site" evidence="1">
    <location>
        <begin position="103"/>
        <end position="106"/>
    </location>
    <ligand>
        <name>ATP</name>
        <dbReference type="ChEBI" id="CHEBI:30616"/>
    </ligand>
</feature>
<feature type="binding site" evidence="1">
    <location>
        <position position="104"/>
    </location>
    <ligand>
        <name>Mg(2+)</name>
        <dbReference type="ChEBI" id="CHEBI:18420"/>
        <note>catalytic</note>
    </ligand>
</feature>
<feature type="binding site" description="in other chain" evidence="1">
    <location>
        <begin position="126"/>
        <end position="128"/>
    </location>
    <ligand>
        <name>substrate</name>
        <note>ligand shared between dimeric partners</note>
    </ligand>
</feature>
<feature type="binding site" description="in other chain" evidence="1">
    <location>
        <position position="155"/>
    </location>
    <ligand>
        <name>ADP</name>
        <dbReference type="ChEBI" id="CHEBI:456216"/>
        <note>allosteric activator; ligand shared between dimeric partners</note>
    </ligand>
</feature>
<feature type="binding site" evidence="1">
    <location>
        <position position="163"/>
    </location>
    <ligand>
        <name>substrate</name>
        <note>ligand shared between dimeric partners</note>
    </ligand>
</feature>
<feature type="binding site" description="in other chain" evidence="1">
    <location>
        <begin position="170"/>
        <end position="172"/>
    </location>
    <ligand>
        <name>substrate</name>
        <note>ligand shared between dimeric partners</note>
    </ligand>
</feature>
<feature type="binding site" description="in other chain" evidence="1">
    <location>
        <begin position="186"/>
        <end position="188"/>
    </location>
    <ligand>
        <name>ADP</name>
        <dbReference type="ChEBI" id="CHEBI:456216"/>
        <note>allosteric activator; ligand shared between dimeric partners</note>
    </ligand>
</feature>
<feature type="binding site" description="in other chain" evidence="1">
    <location>
        <position position="212"/>
    </location>
    <ligand>
        <name>ADP</name>
        <dbReference type="ChEBI" id="CHEBI:456216"/>
        <note>allosteric activator; ligand shared between dimeric partners</note>
    </ligand>
</feature>
<feature type="binding site" description="in other chain" evidence="1">
    <location>
        <begin position="214"/>
        <end position="216"/>
    </location>
    <ligand>
        <name>ADP</name>
        <dbReference type="ChEBI" id="CHEBI:456216"/>
        <note>allosteric activator; ligand shared between dimeric partners</note>
    </ligand>
</feature>
<feature type="binding site" description="in other chain" evidence="1">
    <location>
        <position position="223"/>
    </location>
    <ligand>
        <name>substrate</name>
        <note>ligand shared between dimeric partners</note>
    </ligand>
</feature>
<feature type="binding site" evidence="1">
    <location>
        <position position="244"/>
    </location>
    <ligand>
        <name>substrate</name>
        <note>ligand shared between dimeric partners</note>
    </ligand>
</feature>
<feature type="binding site" description="in other chain" evidence="1">
    <location>
        <begin position="250"/>
        <end position="253"/>
    </location>
    <ligand>
        <name>substrate</name>
        <note>ligand shared between dimeric partners</note>
    </ligand>
</feature>
<organism>
    <name type="scientific">Aliivibrio fischeri (strain ATCC 700601 / ES114)</name>
    <name type="common">Vibrio fischeri</name>
    <dbReference type="NCBI Taxonomy" id="312309"/>
    <lineage>
        <taxon>Bacteria</taxon>
        <taxon>Pseudomonadati</taxon>
        <taxon>Pseudomonadota</taxon>
        <taxon>Gammaproteobacteria</taxon>
        <taxon>Vibrionales</taxon>
        <taxon>Vibrionaceae</taxon>
        <taxon>Aliivibrio</taxon>
    </lineage>
</organism>
<sequence length="320" mass="34691">MVKKIGVLTSGGDAPGMNAAVRGVVRTALTEGLEVFGIHDGYLGLVEDRIEKLERHSVSDMINRGGTFLGSARFPEFKEVAVREKAIENLKKHDIDALIVIGGDGSYMGAKKLTEMGYPCIGLPGTIDNDIAGTDYTIGYLTALNTVIDAIDRLRDTSSSHQRISIVEVMGRHCGDLTLMSAIAGGCEYVITPETGLNKEALIQNIQDGIAKGKKHAIIAITELMTDVNQLAKEIEAETGRETRATVLGHIQRGGQPGAFDRILASRMGNYGVKLLIDGHGGRCVGIQNEQLVHHDIIDAIENMRRPEKLELYKVAEELF</sequence>
<dbReference type="EC" id="2.7.1.11" evidence="1"/>
<dbReference type="EMBL" id="CP000020">
    <property type="protein sequence ID" value="AAW86835.1"/>
    <property type="molecule type" value="Genomic_DNA"/>
</dbReference>
<dbReference type="RefSeq" id="WP_005421189.1">
    <property type="nucleotide sequence ID" value="NZ_CAWLES010000001.1"/>
</dbReference>
<dbReference type="RefSeq" id="YP_205723.1">
    <property type="nucleotide sequence ID" value="NC_006840.2"/>
</dbReference>
<dbReference type="SMR" id="Q5E2B1"/>
<dbReference type="STRING" id="312309.VF_2340"/>
<dbReference type="EnsemblBacteria" id="AAW86835">
    <property type="protein sequence ID" value="AAW86835"/>
    <property type="gene ID" value="VF_2340"/>
</dbReference>
<dbReference type="GeneID" id="54165063"/>
<dbReference type="KEGG" id="vfi:VF_2340"/>
<dbReference type="PATRIC" id="fig|312309.11.peg.2379"/>
<dbReference type="eggNOG" id="COG0205">
    <property type="taxonomic scope" value="Bacteria"/>
</dbReference>
<dbReference type="HOGENOM" id="CLU_020655_0_1_6"/>
<dbReference type="OrthoDB" id="9802503at2"/>
<dbReference type="UniPathway" id="UPA00109">
    <property type="reaction ID" value="UER00182"/>
</dbReference>
<dbReference type="Proteomes" id="UP000000537">
    <property type="component" value="Chromosome I"/>
</dbReference>
<dbReference type="GO" id="GO:0005945">
    <property type="term" value="C:6-phosphofructokinase complex"/>
    <property type="evidence" value="ECO:0007669"/>
    <property type="project" value="TreeGrafter"/>
</dbReference>
<dbReference type="GO" id="GO:0003872">
    <property type="term" value="F:6-phosphofructokinase activity"/>
    <property type="evidence" value="ECO:0007669"/>
    <property type="project" value="UniProtKB-UniRule"/>
</dbReference>
<dbReference type="GO" id="GO:0016208">
    <property type="term" value="F:AMP binding"/>
    <property type="evidence" value="ECO:0007669"/>
    <property type="project" value="TreeGrafter"/>
</dbReference>
<dbReference type="GO" id="GO:0005524">
    <property type="term" value="F:ATP binding"/>
    <property type="evidence" value="ECO:0007669"/>
    <property type="project" value="UniProtKB-KW"/>
</dbReference>
<dbReference type="GO" id="GO:0070095">
    <property type="term" value="F:fructose-6-phosphate binding"/>
    <property type="evidence" value="ECO:0007669"/>
    <property type="project" value="TreeGrafter"/>
</dbReference>
<dbReference type="GO" id="GO:0042802">
    <property type="term" value="F:identical protein binding"/>
    <property type="evidence" value="ECO:0007669"/>
    <property type="project" value="TreeGrafter"/>
</dbReference>
<dbReference type="GO" id="GO:0046872">
    <property type="term" value="F:metal ion binding"/>
    <property type="evidence" value="ECO:0007669"/>
    <property type="project" value="UniProtKB-KW"/>
</dbReference>
<dbReference type="GO" id="GO:0048029">
    <property type="term" value="F:monosaccharide binding"/>
    <property type="evidence" value="ECO:0007669"/>
    <property type="project" value="TreeGrafter"/>
</dbReference>
<dbReference type="GO" id="GO:0061621">
    <property type="term" value="P:canonical glycolysis"/>
    <property type="evidence" value="ECO:0007669"/>
    <property type="project" value="TreeGrafter"/>
</dbReference>
<dbReference type="GO" id="GO:0030388">
    <property type="term" value="P:fructose 1,6-bisphosphate metabolic process"/>
    <property type="evidence" value="ECO:0007669"/>
    <property type="project" value="TreeGrafter"/>
</dbReference>
<dbReference type="GO" id="GO:0006002">
    <property type="term" value="P:fructose 6-phosphate metabolic process"/>
    <property type="evidence" value="ECO:0007669"/>
    <property type="project" value="InterPro"/>
</dbReference>
<dbReference type="CDD" id="cd00763">
    <property type="entry name" value="Bacterial_PFK"/>
    <property type="match status" value="1"/>
</dbReference>
<dbReference type="FunFam" id="3.40.50.450:FF:000001">
    <property type="entry name" value="ATP-dependent 6-phosphofructokinase"/>
    <property type="match status" value="1"/>
</dbReference>
<dbReference type="FunFam" id="3.40.50.460:FF:000002">
    <property type="entry name" value="ATP-dependent 6-phosphofructokinase"/>
    <property type="match status" value="1"/>
</dbReference>
<dbReference type="Gene3D" id="3.40.50.450">
    <property type="match status" value="1"/>
</dbReference>
<dbReference type="Gene3D" id="3.40.50.460">
    <property type="entry name" value="Phosphofructokinase domain"/>
    <property type="match status" value="1"/>
</dbReference>
<dbReference type="HAMAP" id="MF_00339">
    <property type="entry name" value="Phosphofructokinase_I_B1"/>
    <property type="match status" value="1"/>
</dbReference>
<dbReference type="InterPro" id="IPR022953">
    <property type="entry name" value="ATP_PFK"/>
</dbReference>
<dbReference type="InterPro" id="IPR012003">
    <property type="entry name" value="ATP_PFK_prok-type"/>
</dbReference>
<dbReference type="InterPro" id="IPR012828">
    <property type="entry name" value="PFKA_ATP_prok"/>
</dbReference>
<dbReference type="InterPro" id="IPR015912">
    <property type="entry name" value="Phosphofructokinase_CS"/>
</dbReference>
<dbReference type="InterPro" id="IPR000023">
    <property type="entry name" value="Phosphofructokinase_dom"/>
</dbReference>
<dbReference type="InterPro" id="IPR035966">
    <property type="entry name" value="PKF_sf"/>
</dbReference>
<dbReference type="NCBIfam" id="TIGR02482">
    <property type="entry name" value="PFKA_ATP"/>
    <property type="match status" value="1"/>
</dbReference>
<dbReference type="NCBIfam" id="NF002872">
    <property type="entry name" value="PRK03202.1"/>
    <property type="match status" value="1"/>
</dbReference>
<dbReference type="PANTHER" id="PTHR13697:SF4">
    <property type="entry name" value="ATP-DEPENDENT 6-PHOSPHOFRUCTOKINASE"/>
    <property type="match status" value="1"/>
</dbReference>
<dbReference type="PANTHER" id="PTHR13697">
    <property type="entry name" value="PHOSPHOFRUCTOKINASE"/>
    <property type="match status" value="1"/>
</dbReference>
<dbReference type="Pfam" id="PF00365">
    <property type="entry name" value="PFK"/>
    <property type="match status" value="1"/>
</dbReference>
<dbReference type="PIRSF" id="PIRSF000532">
    <property type="entry name" value="ATP_PFK_prok"/>
    <property type="match status" value="1"/>
</dbReference>
<dbReference type="PRINTS" id="PR00476">
    <property type="entry name" value="PHFRCTKINASE"/>
</dbReference>
<dbReference type="SUPFAM" id="SSF53784">
    <property type="entry name" value="Phosphofructokinase"/>
    <property type="match status" value="1"/>
</dbReference>
<dbReference type="PROSITE" id="PS00433">
    <property type="entry name" value="PHOSPHOFRUCTOKINASE"/>
    <property type="match status" value="1"/>
</dbReference>